<dbReference type="EMBL" id="X72211">
    <property type="protein sequence ID" value="CAA51010.1"/>
    <property type="molecule type" value="mRNA"/>
</dbReference>
<dbReference type="EMBL" id="X77764">
    <property type="protein sequence ID" value="CAA54804.1"/>
    <property type="molecule type" value="mRNA"/>
</dbReference>
<dbReference type="PIR" id="S45348">
    <property type="entry name" value="S44047"/>
</dbReference>
<dbReference type="SMR" id="P49844"/>
<dbReference type="Proteomes" id="UP000186698">
    <property type="component" value="Unplaced"/>
</dbReference>
<dbReference type="GO" id="GO:0005813">
    <property type="term" value="C:centrosome"/>
    <property type="evidence" value="ECO:0007669"/>
    <property type="project" value="UniProtKB-SubCell"/>
</dbReference>
<dbReference type="GO" id="GO:0000785">
    <property type="term" value="C:chromatin"/>
    <property type="evidence" value="ECO:0000318"/>
    <property type="project" value="GO_Central"/>
</dbReference>
<dbReference type="GO" id="GO:0005737">
    <property type="term" value="C:cytoplasm"/>
    <property type="evidence" value="ECO:0000250"/>
    <property type="project" value="UniProtKB"/>
</dbReference>
<dbReference type="GO" id="GO:0005739">
    <property type="term" value="C:mitochondrion"/>
    <property type="evidence" value="ECO:0007669"/>
    <property type="project" value="UniProtKB-SubCell"/>
</dbReference>
<dbReference type="GO" id="GO:0016607">
    <property type="term" value="C:nuclear speck"/>
    <property type="evidence" value="ECO:0000250"/>
    <property type="project" value="UniProtKB"/>
</dbReference>
<dbReference type="GO" id="GO:0005634">
    <property type="term" value="C:nucleus"/>
    <property type="evidence" value="ECO:0000250"/>
    <property type="project" value="UniProtKB"/>
</dbReference>
<dbReference type="GO" id="GO:0005819">
    <property type="term" value="C:spindle"/>
    <property type="evidence" value="ECO:0007669"/>
    <property type="project" value="UniProtKB-SubCell"/>
</dbReference>
<dbReference type="GO" id="GO:0003700">
    <property type="term" value="F:DNA-binding transcription factor activity"/>
    <property type="evidence" value="ECO:0000250"/>
    <property type="project" value="UniProtKB"/>
</dbReference>
<dbReference type="GO" id="GO:0034056">
    <property type="term" value="F:estrogen response element binding"/>
    <property type="evidence" value="ECO:0000318"/>
    <property type="project" value="GO_Central"/>
</dbReference>
<dbReference type="GO" id="GO:0004883">
    <property type="term" value="F:nuclear glucocorticoid receptor activity"/>
    <property type="evidence" value="ECO:0007669"/>
    <property type="project" value="InterPro"/>
</dbReference>
<dbReference type="GO" id="GO:0004879">
    <property type="term" value="F:nuclear receptor activity"/>
    <property type="evidence" value="ECO:0000250"/>
    <property type="project" value="UniProtKB"/>
</dbReference>
<dbReference type="GO" id="GO:0005496">
    <property type="term" value="F:steroid binding"/>
    <property type="evidence" value="ECO:0000250"/>
    <property type="project" value="UniProtKB"/>
</dbReference>
<dbReference type="GO" id="GO:1990239">
    <property type="term" value="F:steroid hormone binding"/>
    <property type="evidence" value="ECO:0000250"/>
    <property type="project" value="UniProtKB"/>
</dbReference>
<dbReference type="GO" id="GO:0008270">
    <property type="term" value="F:zinc ion binding"/>
    <property type="evidence" value="ECO:0007669"/>
    <property type="project" value="UniProtKB-KW"/>
</dbReference>
<dbReference type="GO" id="GO:0071385">
    <property type="term" value="P:cellular response to glucocorticoid stimulus"/>
    <property type="evidence" value="ECO:0000250"/>
    <property type="project" value="UniProtKB"/>
</dbReference>
<dbReference type="GO" id="GO:0071383">
    <property type="term" value="P:cellular response to steroid hormone stimulus"/>
    <property type="evidence" value="ECO:0000250"/>
    <property type="project" value="UniProtKB"/>
</dbReference>
<dbReference type="GO" id="GO:0006325">
    <property type="term" value="P:chromatin organization"/>
    <property type="evidence" value="ECO:0007669"/>
    <property type="project" value="UniProtKB-KW"/>
</dbReference>
<dbReference type="GO" id="GO:0030518">
    <property type="term" value="P:nuclear receptor-mediated steroid hormone signaling pathway"/>
    <property type="evidence" value="ECO:0000318"/>
    <property type="project" value="GO_Central"/>
</dbReference>
<dbReference type="GO" id="GO:0045944">
    <property type="term" value="P:positive regulation of transcription by RNA polymerase II"/>
    <property type="evidence" value="ECO:0000250"/>
    <property type="project" value="UniProtKB"/>
</dbReference>
<dbReference type="GO" id="GO:0006357">
    <property type="term" value="P:regulation of transcription by RNA polymerase II"/>
    <property type="evidence" value="ECO:0000318"/>
    <property type="project" value="GO_Central"/>
</dbReference>
<dbReference type="CDD" id="cd07172">
    <property type="entry name" value="NR_DBD_GR_PR"/>
    <property type="match status" value="1"/>
</dbReference>
<dbReference type="CDD" id="cd07076">
    <property type="entry name" value="NR_LBD_GR"/>
    <property type="match status" value="1"/>
</dbReference>
<dbReference type="FunFam" id="1.10.565.10:FF:000004">
    <property type="entry name" value="Androgen receptor variant"/>
    <property type="match status" value="1"/>
</dbReference>
<dbReference type="FunFam" id="3.30.50.10:FF:000022">
    <property type="entry name" value="glucocorticoid receptor isoform X1"/>
    <property type="match status" value="1"/>
</dbReference>
<dbReference type="Gene3D" id="3.30.50.10">
    <property type="entry name" value="Erythroid Transcription Factor GATA-1, subunit A"/>
    <property type="match status" value="1"/>
</dbReference>
<dbReference type="Gene3D" id="1.10.565.10">
    <property type="entry name" value="Retinoid X Receptor"/>
    <property type="match status" value="1"/>
</dbReference>
<dbReference type="InterPro" id="IPR001409">
    <property type="entry name" value="Glcrtcd_rcpt"/>
</dbReference>
<dbReference type="InterPro" id="IPR035500">
    <property type="entry name" value="NHR-like_dom_sf"/>
</dbReference>
<dbReference type="InterPro" id="IPR000536">
    <property type="entry name" value="Nucl_hrmn_rcpt_lig-bd"/>
</dbReference>
<dbReference type="InterPro" id="IPR050200">
    <property type="entry name" value="Nuclear_hormone_rcpt_NR3"/>
</dbReference>
<dbReference type="InterPro" id="IPR001723">
    <property type="entry name" value="Nuclear_hrmn_rcpt"/>
</dbReference>
<dbReference type="InterPro" id="IPR001628">
    <property type="entry name" value="Znf_hrmn_rcpt"/>
</dbReference>
<dbReference type="InterPro" id="IPR013088">
    <property type="entry name" value="Znf_NHR/GATA"/>
</dbReference>
<dbReference type="PANTHER" id="PTHR48092">
    <property type="entry name" value="KNIRPS-RELATED PROTEIN-RELATED"/>
    <property type="match status" value="1"/>
</dbReference>
<dbReference type="Pfam" id="PF02155">
    <property type="entry name" value="GCR"/>
    <property type="match status" value="1"/>
</dbReference>
<dbReference type="Pfam" id="PF00104">
    <property type="entry name" value="Hormone_recep"/>
    <property type="match status" value="1"/>
</dbReference>
<dbReference type="Pfam" id="PF00105">
    <property type="entry name" value="zf-C4"/>
    <property type="match status" value="1"/>
</dbReference>
<dbReference type="PRINTS" id="PR00528">
    <property type="entry name" value="GLCORTICOIDR"/>
</dbReference>
<dbReference type="PRINTS" id="PR00398">
    <property type="entry name" value="STRDHORMONER"/>
</dbReference>
<dbReference type="PRINTS" id="PR00047">
    <property type="entry name" value="STROIDFINGER"/>
</dbReference>
<dbReference type="SMART" id="SM00430">
    <property type="entry name" value="HOLI"/>
    <property type="match status" value="1"/>
</dbReference>
<dbReference type="SMART" id="SM00399">
    <property type="entry name" value="ZnF_C4"/>
    <property type="match status" value="1"/>
</dbReference>
<dbReference type="SUPFAM" id="SSF57716">
    <property type="entry name" value="Glucocorticoid receptor-like (DNA-binding domain)"/>
    <property type="match status" value="1"/>
</dbReference>
<dbReference type="SUPFAM" id="SSF48508">
    <property type="entry name" value="Nuclear receptor ligand-binding domain"/>
    <property type="match status" value="1"/>
</dbReference>
<dbReference type="PROSITE" id="PS51843">
    <property type="entry name" value="NR_LBD"/>
    <property type="match status" value="1"/>
</dbReference>
<dbReference type="PROSITE" id="PS00031">
    <property type="entry name" value="NUCLEAR_REC_DBD_1"/>
    <property type="match status" value="1"/>
</dbReference>
<dbReference type="PROSITE" id="PS51030">
    <property type="entry name" value="NUCLEAR_REC_DBD_2"/>
    <property type="match status" value="1"/>
</dbReference>
<keyword id="KW-0156">Chromatin regulator</keyword>
<keyword id="KW-0963">Cytoplasm</keyword>
<keyword id="KW-0206">Cytoskeleton</keyword>
<keyword id="KW-0238">DNA-binding</keyword>
<keyword id="KW-0446">Lipid-binding</keyword>
<keyword id="KW-0479">Metal-binding</keyword>
<keyword id="KW-0496">Mitochondrion</keyword>
<keyword id="KW-0539">Nucleus</keyword>
<keyword id="KW-0675">Receptor</keyword>
<keyword id="KW-1185">Reference proteome</keyword>
<keyword id="KW-0754">Steroid-binding</keyword>
<keyword id="KW-0804">Transcription</keyword>
<keyword id="KW-0805">Transcription regulation</keyword>
<keyword id="KW-0862">Zinc</keyword>
<keyword id="KW-0863">Zinc-finger</keyword>
<organism>
    <name type="scientific">Xenopus laevis</name>
    <name type="common">African clawed frog</name>
    <dbReference type="NCBI Taxonomy" id="8355"/>
    <lineage>
        <taxon>Eukaryota</taxon>
        <taxon>Metazoa</taxon>
        <taxon>Chordata</taxon>
        <taxon>Craniata</taxon>
        <taxon>Vertebrata</taxon>
        <taxon>Euteleostomi</taxon>
        <taxon>Amphibia</taxon>
        <taxon>Batrachia</taxon>
        <taxon>Anura</taxon>
        <taxon>Pipoidea</taxon>
        <taxon>Pipidae</taxon>
        <taxon>Xenopodinae</taxon>
        <taxon>Xenopus</taxon>
        <taxon>Xenopus</taxon>
    </lineage>
</organism>
<accession>P49844</accession>
<name>GCR_XENLA</name>
<proteinExistence type="evidence at transcript level"/>
<sequence length="776" mass="84977">MDPKDLLKPSSGSPAVRGSPHYNDKPGNVIEFFGNYRGGVSVSVSASCPTSTASQSNTRQQQHFQKQLTATGDSTNGLNNNVPQPDLSKAVSLSMGLYMGESDTKVMSSDIAFPSQEQIGISTGETDFSLLEESIANLQAKSLAPDKLIEISEDPGGFKCDISAQPRPSMGQGGSNGSSSTNLFPKDQCTFDLLRDLGISPDSPLDGKSNPWLDPLFDEQEAFNLLSPLGTGDPFFMKSEVLSEGSKTLSLEDGTQRLGDHAKDMLLPSADRPISQVKTEKEDYIELCTPGVVNEEKFGPVYCVGNFSGSGLFGNKSSAISVHGVSTSGGQMYHYDLNTATISQQDVKPVFNLGSPGTSIAEGWNRCHGSGNDTAASPGNVNFPNRSVFSNGYSSPGIRSDASPSPSTSSTSTGPPPKLCLVCSDEASGCHYGVLTCGSCKVFFKRAVEGQHNYLCAGRNDCIIDKIRRKNCPACRYRKCLQAGMNLEARKTKKKIKGIQQSTTATARESPETSMTRTLVPASVAQLTPTLISLLEVIEPEVLYSGYDSSIPDTTRRLMSSLNMLGGRQVVSAVRWAKAIPGFRNLHLDDQMTLLQYSWMFLMVFALGWRSYKQTNGSILYFAPDLVITEDRMHLPFMQERCQEMLKIAGEMSSLQISYDEYLCMKVLLLMCTIPKEGLKSHALFEEIRMTYIKELGKAIVKREGNSSQNWQRFYQLTKLLDSMHEVAENLLAFCFLSFLDKSMSIEFPDMLSEIISNQIPKYSSGNLKKLLFHQK</sequence>
<protein>
    <recommendedName>
        <fullName>Glucocorticoid receptor</fullName>
        <shortName>GR</shortName>
    </recommendedName>
    <alternativeName>
        <fullName>Nuclear receptor subfamily 3 group C member 1</fullName>
    </alternativeName>
</protein>
<gene>
    <name type="primary">nr3c1</name>
    <name type="synonym">grl</name>
</gene>
<evidence type="ECO:0000250" key="1">
    <source>
        <dbReference type="UniProtKB" id="P04150"/>
    </source>
</evidence>
<evidence type="ECO:0000250" key="2">
    <source>
        <dbReference type="UniProtKB" id="P06537"/>
    </source>
</evidence>
<evidence type="ECO:0000255" key="3">
    <source>
        <dbReference type="PROSITE-ProRule" id="PRU00407"/>
    </source>
</evidence>
<evidence type="ECO:0000255" key="4">
    <source>
        <dbReference type="PROSITE-ProRule" id="PRU01189"/>
    </source>
</evidence>
<evidence type="ECO:0000256" key="5">
    <source>
        <dbReference type="SAM" id="MobiDB-lite"/>
    </source>
</evidence>
<evidence type="ECO:0000269" key="6">
    <source>
    </source>
</evidence>
<evidence type="ECO:0000305" key="7"/>
<feature type="chain" id="PRO_0000053681" description="Glucocorticoid receptor">
    <location>
        <begin position="1"/>
        <end position="776"/>
    </location>
</feature>
<feature type="domain" description="NR LBD" evidence="4">
    <location>
        <begin position="523"/>
        <end position="757"/>
    </location>
</feature>
<feature type="DNA-binding region" description="Nuclear receptor" evidence="3">
    <location>
        <begin position="420"/>
        <end position="485"/>
    </location>
</feature>
<feature type="zinc finger region" description="NR C4-type" evidence="3">
    <location>
        <begin position="420"/>
        <end position="440"/>
    </location>
</feature>
<feature type="zinc finger region" description="NR C4-type" evidence="3">
    <location>
        <begin position="456"/>
        <end position="480"/>
    </location>
</feature>
<feature type="region of interest" description="Modulating">
    <location>
        <begin position="1"/>
        <end position="419"/>
    </location>
</feature>
<feature type="region of interest" description="Disordered" evidence="5">
    <location>
        <begin position="1"/>
        <end position="25"/>
    </location>
</feature>
<feature type="region of interest" description="Disordered" evidence="5">
    <location>
        <begin position="47"/>
        <end position="86"/>
    </location>
</feature>
<feature type="region of interest" description="Disordered" evidence="5">
    <location>
        <begin position="394"/>
        <end position="415"/>
    </location>
</feature>
<feature type="region of interest" description="Hinge">
    <location>
        <begin position="486"/>
        <end position="522"/>
    </location>
</feature>
<feature type="compositionally biased region" description="Polar residues" evidence="5">
    <location>
        <begin position="47"/>
        <end position="83"/>
    </location>
</feature>
<feature type="compositionally biased region" description="Low complexity" evidence="5">
    <location>
        <begin position="403"/>
        <end position="413"/>
    </location>
</feature>
<feature type="sequence conflict" description="In Ref. 2; CAA54804." evidence="7" ref="2">
    <original>S</original>
    <variation>P</variation>
    <location>
        <position position="502"/>
    </location>
</feature>
<feature type="sequence conflict" description="In Ref. 2; CAA54804." evidence="7" ref="2">
    <original>T</original>
    <variation>A</variation>
    <location>
        <position position="504"/>
    </location>
</feature>
<feature type="sequence conflict" description="In Ref. 2; CAA54804." evidence="7" ref="2">
    <original>T</original>
    <variation>A</variation>
    <location>
        <position position="506"/>
    </location>
</feature>
<feature type="sequence conflict" description="In Ref. 2; CAA54804." evidence="7" ref="2">
    <original>P</original>
    <variation>N</variation>
    <location>
        <position position="511"/>
    </location>
</feature>
<feature type="sequence conflict" description="In Ref. 2; CAA54804." evidence="7" ref="2">
    <original>L</original>
    <variation>M</variation>
    <location>
        <position position="519"/>
    </location>
</feature>
<feature type="sequence conflict" description="In Ref. 2; CAA54804." evidence="7" ref="2">
    <original>Y</original>
    <variation>F</variation>
    <location>
        <position position="544"/>
    </location>
</feature>
<feature type="sequence conflict" description="In Ref. 2; CAA54804." evidence="7" ref="2">
    <original>I</original>
    <variation>M</variation>
    <location>
        <position position="551"/>
    </location>
</feature>
<feature type="sequence conflict" description="In Ref. 2; CAA54804." evidence="7" ref="2">
    <original>S</original>
    <variation>R</variation>
    <location>
        <position position="654"/>
    </location>
</feature>
<feature type="sequence conflict" description="In Ref. 2; CAA54804." evidence="7" ref="2">
    <original>L</original>
    <variation>M</variation>
    <location>
        <position position="740"/>
    </location>
</feature>
<feature type="sequence conflict" description="In Ref. 2; CAA54804." evidence="7" ref="2">
    <original>L</original>
    <variation>I</variation>
    <location>
        <position position="768"/>
    </location>
</feature>
<comment type="function">
    <text evidence="1 2 6">Receptor for glucocorticoids (GC) (PubMed:8018720). Has a dual mode of action: as a transcription factor that binds to glucocorticoid response elements (GRE), both for nuclear and mitochondrial DNA, and as a modulator of other transcription factors (By similarity). Affects inflammatory responses, cellular proliferation and differentiation in target tissues (By similarity). Involved in chromatin remodeling (By similarity). Plays a role in rapid mRNA degradation by binding to the 5' UTR of target mRNAs and interacting with PNRC2 in a ligand-dependent manner which recruits the RNA helicase UPF1 and the mRNA-decapping enzyme DCP1A, leading to RNA decay (By similarity). Could act as a coactivator for STAT5-dependent transcription upon growth hormone (GH) stimulation and could reveal an essential role of hepatic GR in the control of body growth (By similarity). Mediates glucocorticoid-induced apoptosis (By similarity). Promotes accurate chromosome segregation during mitosis (By similarity). May act as a tumor suppressor (By similarity). May play a negative role in adipogenesis through the regulation of lipolytic and antilipogenic gene expression (By similarity).</text>
</comment>
<comment type="subunit">
    <text evidence="1">Heteromultimeric cytoplasmic complex with HSP90. Upon ligand binding the complex undergoes a conformation change and moves to the nucleus, where it dissociates. Binds to DNA as a homodimer, and as heterodimer with NR3C2. Interaction with numerous other transcription factors modulates transcription activation (By similarity).</text>
</comment>
<comment type="subcellular location">
    <subcellularLocation>
        <location evidence="1">Cytoplasm</location>
    </subcellularLocation>
    <subcellularLocation>
        <location evidence="1">Nucleus</location>
    </subcellularLocation>
    <subcellularLocation>
        <location evidence="1">Mitochondrion</location>
    </subcellularLocation>
    <subcellularLocation>
        <location evidence="1">Cytoplasm</location>
        <location evidence="1">Cytoskeleton</location>
        <location evidence="1">Spindle</location>
    </subcellularLocation>
    <subcellularLocation>
        <location evidence="1">Cytoplasm</location>
        <location evidence="1">Cytoskeleton</location>
        <location evidence="1">Microtubule organizing center</location>
        <location evidence="1">Centrosome</location>
    </subcellularLocation>
    <text evidence="1">After ligand activation, translocates from the cytoplasm to the nucleus.</text>
</comment>
<comment type="tissue specificity">
    <text evidence="6">Expressed in liver with relative abundance.</text>
</comment>
<comment type="developmental stage">
    <text evidence="6">Rareley expressed between embryonic stages 17 and 24. Expression starts from stage 32.</text>
</comment>
<comment type="domain">
    <text evidence="1">Composed of three domains: a modulating N-terminal domain, a DNA-binding domain and a C-terminal ligand-binding domain. The ligand-binding domain is required for correct chromosome segregation during mitosis although ligand binding is not required.</text>
</comment>
<comment type="similarity">
    <text evidence="7">Belongs to the nuclear hormone receptor family. NR3 subfamily.</text>
</comment>
<reference key="1">
    <citation type="journal article" date="1994" name="Biochim. Biophys. Acta">
        <title>Expression of the glucocorticoid receptor gene is regulated during early embryogenesis of Xenopus laevis.</title>
        <authorList>
            <person name="Gao X."/>
            <person name="Kalkhoven E."/>
            <person name="Peterson-Maduro J."/>
            <person name="van der Burg B."/>
            <person name="Destree O.H.J."/>
        </authorList>
    </citation>
    <scope>NUCLEOTIDE SEQUENCE [MRNA]</scope>
    <scope>FUNCTION</scope>
    <scope>TISSUE SPECIFICITY</scope>
    <scope>DEVELOPMENTAL STAGE</scope>
    <source>
        <tissue>Embryo</tissue>
    </source>
</reference>
<reference key="2">
    <citation type="submission" date="1994-02" db="EMBL/GenBank/DDBJ databases">
        <authorList>
            <person name="Picard D."/>
        </authorList>
    </citation>
    <scope>NUCLEOTIDE SEQUENCE [MRNA] OF 452-776</scope>
    <source>
        <tissue>Liver</tissue>
    </source>
</reference>